<gene>
    <name evidence="1" type="primary">tatB</name>
    <name type="ordered locus">SPA3815</name>
</gene>
<sequence length="182" mass="19601">MFDIGFSELLLVFVIGLIVLGPQRLPVAVKTVAGWIRALRSLATTVQNELTQELKLQEFQDSLKKVEKASLENLTPELKASMDELRQAAESMKRTYSANDPEQASDEAHTIHNPVVKGNETQHEGVTPAAAETQASAPEQKPEPVKANVPESTETASVATIDAEKKSAAPVVESSPSSSDKP</sequence>
<protein>
    <recommendedName>
        <fullName evidence="1">Sec-independent protein translocase protein TatB</fullName>
    </recommendedName>
</protein>
<accession>Q5PKQ9</accession>
<feature type="chain" id="PRO_0000301232" description="Sec-independent protein translocase protein TatB">
    <location>
        <begin position="1"/>
        <end position="182"/>
    </location>
</feature>
<feature type="transmembrane region" description="Helical" evidence="1">
    <location>
        <begin position="1"/>
        <end position="21"/>
    </location>
</feature>
<feature type="region of interest" description="Disordered" evidence="2">
    <location>
        <begin position="87"/>
        <end position="107"/>
    </location>
</feature>
<feature type="region of interest" description="Disordered" evidence="2">
    <location>
        <begin position="121"/>
        <end position="182"/>
    </location>
</feature>
<feature type="compositionally biased region" description="Low complexity" evidence="2">
    <location>
        <begin position="168"/>
        <end position="182"/>
    </location>
</feature>
<comment type="function">
    <text evidence="1">Part of the twin-arginine translocation (Tat) system that transports large folded proteins containing a characteristic twin-arginine motif in their signal peptide across membranes. Together with TatC, TatB is part of a receptor directly interacting with Tat signal peptides. TatB may form an oligomeric binding site that transiently accommodates folded Tat precursor proteins before their translocation.</text>
</comment>
<comment type="subunit">
    <text evidence="1">The Tat system comprises two distinct complexes: a TatABC complex, containing multiple copies of TatA, TatB and TatC subunits, and a separate TatA complex, containing only TatA subunits. Substrates initially bind to the TatABC complex, which probably triggers association of the separate TatA complex to form the active translocon.</text>
</comment>
<comment type="subcellular location">
    <subcellularLocation>
        <location evidence="1">Cell inner membrane</location>
        <topology evidence="1">Single-pass membrane protein</topology>
    </subcellularLocation>
</comment>
<comment type="similarity">
    <text evidence="1">Belongs to the TatB family.</text>
</comment>
<dbReference type="EMBL" id="CP000026">
    <property type="protein sequence ID" value="AAV79591.1"/>
    <property type="molecule type" value="Genomic_DNA"/>
</dbReference>
<dbReference type="RefSeq" id="WP_000459612.1">
    <property type="nucleotide sequence ID" value="NC_006511.1"/>
</dbReference>
<dbReference type="SMR" id="Q5PKQ9"/>
<dbReference type="KEGG" id="spt:SPA3815"/>
<dbReference type="HOGENOM" id="CLU_086034_1_0_6"/>
<dbReference type="Proteomes" id="UP000008185">
    <property type="component" value="Chromosome"/>
</dbReference>
<dbReference type="GO" id="GO:0033281">
    <property type="term" value="C:TAT protein transport complex"/>
    <property type="evidence" value="ECO:0007669"/>
    <property type="project" value="UniProtKB-UniRule"/>
</dbReference>
<dbReference type="GO" id="GO:0008320">
    <property type="term" value="F:protein transmembrane transporter activity"/>
    <property type="evidence" value="ECO:0007669"/>
    <property type="project" value="UniProtKB-UniRule"/>
</dbReference>
<dbReference type="GO" id="GO:0043953">
    <property type="term" value="P:protein transport by the Tat complex"/>
    <property type="evidence" value="ECO:0007669"/>
    <property type="project" value="UniProtKB-UniRule"/>
</dbReference>
<dbReference type="FunFam" id="1.20.5.3310:FF:000002">
    <property type="entry name" value="Sec-independent protein translocase protein TatB"/>
    <property type="match status" value="1"/>
</dbReference>
<dbReference type="Gene3D" id="1.20.5.3310">
    <property type="match status" value="1"/>
</dbReference>
<dbReference type="HAMAP" id="MF_00237">
    <property type="entry name" value="TatB"/>
    <property type="match status" value="1"/>
</dbReference>
<dbReference type="InterPro" id="IPR018448">
    <property type="entry name" value="TatB"/>
</dbReference>
<dbReference type="NCBIfam" id="TIGR01410">
    <property type="entry name" value="tatB"/>
    <property type="match status" value="1"/>
</dbReference>
<dbReference type="PANTHER" id="PTHR33162">
    <property type="entry name" value="SEC-INDEPENDENT PROTEIN TRANSLOCASE PROTEIN TATA, CHLOROPLASTIC"/>
    <property type="match status" value="1"/>
</dbReference>
<dbReference type="PANTHER" id="PTHR33162:SF1">
    <property type="entry name" value="SEC-INDEPENDENT PROTEIN TRANSLOCASE PROTEIN TATA, CHLOROPLASTIC"/>
    <property type="match status" value="1"/>
</dbReference>
<dbReference type="PRINTS" id="PR01506">
    <property type="entry name" value="TATBPROTEIN"/>
</dbReference>
<keyword id="KW-0997">Cell inner membrane</keyword>
<keyword id="KW-1003">Cell membrane</keyword>
<keyword id="KW-0472">Membrane</keyword>
<keyword id="KW-0653">Protein transport</keyword>
<keyword id="KW-0811">Translocation</keyword>
<keyword id="KW-0812">Transmembrane</keyword>
<keyword id="KW-1133">Transmembrane helix</keyword>
<keyword id="KW-0813">Transport</keyword>
<evidence type="ECO:0000255" key="1">
    <source>
        <dbReference type="HAMAP-Rule" id="MF_00237"/>
    </source>
</evidence>
<evidence type="ECO:0000256" key="2">
    <source>
        <dbReference type="SAM" id="MobiDB-lite"/>
    </source>
</evidence>
<name>TATB_SALPA</name>
<reference key="1">
    <citation type="journal article" date="2004" name="Nat. Genet.">
        <title>Comparison of genome degradation in Paratyphi A and Typhi, human-restricted serovars of Salmonella enterica that cause typhoid.</title>
        <authorList>
            <person name="McClelland M."/>
            <person name="Sanderson K.E."/>
            <person name="Clifton S.W."/>
            <person name="Latreille P."/>
            <person name="Porwollik S."/>
            <person name="Sabo A."/>
            <person name="Meyer R."/>
            <person name="Bieri T."/>
            <person name="Ozersky P."/>
            <person name="McLellan M."/>
            <person name="Harkins C.R."/>
            <person name="Wang C."/>
            <person name="Nguyen C."/>
            <person name="Berghoff A."/>
            <person name="Elliott G."/>
            <person name="Kohlberg S."/>
            <person name="Strong C."/>
            <person name="Du F."/>
            <person name="Carter J."/>
            <person name="Kremizki C."/>
            <person name="Layman D."/>
            <person name="Leonard S."/>
            <person name="Sun H."/>
            <person name="Fulton L."/>
            <person name="Nash W."/>
            <person name="Miner T."/>
            <person name="Minx P."/>
            <person name="Delehaunty K."/>
            <person name="Fronick C."/>
            <person name="Magrini V."/>
            <person name="Nhan M."/>
            <person name="Warren W."/>
            <person name="Florea L."/>
            <person name="Spieth J."/>
            <person name="Wilson R.K."/>
        </authorList>
    </citation>
    <scope>NUCLEOTIDE SEQUENCE [LARGE SCALE GENOMIC DNA]</scope>
    <source>
        <strain>ATCC 9150 / SARB42</strain>
    </source>
</reference>
<organism>
    <name type="scientific">Salmonella paratyphi A (strain ATCC 9150 / SARB42)</name>
    <dbReference type="NCBI Taxonomy" id="295319"/>
    <lineage>
        <taxon>Bacteria</taxon>
        <taxon>Pseudomonadati</taxon>
        <taxon>Pseudomonadota</taxon>
        <taxon>Gammaproteobacteria</taxon>
        <taxon>Enterobacterales</taxon>
        <taxon>Enterobacteriaceae</taxon>
        <taxon>Salmonella</taxon>
    </lineage>
</organism>
<proteinExistence type="inferred from homology"/>